<name>RS8_BORBZ</name>
<organism>
    <name type="scientific">Borreliella burgdorferi (strain ZS7)</name>
    <name type="common">Borrelia burgdorferi</name>
    <dbReference type="NCBI Taxonomy" id="445985"/>
    <lineage>
        <taxon>Bacteria</taxon>
        <taxon>Pseudomonadati</taxon>
        <taxon>Spirochaetota</taxon>
        <taxon>Spirochaetia</taxon>
        <taxon>Spirochaetales</taxon>
        <taxon>Borreliaceae</taxon>
        <taxon>Borreliella</taxon>
    </lineage>
</organism>
<gene>
    <name evidence="1" type="primary">rpsH</name>
    <name type="ordered locus">BbuZS7_0503</name>
</gene>
<proteinExistence type="inferred from homology"/>
<sequence length="132" mass="14814">MAITYSIGDMLTKLRNASRVGHGSVDLKMSNMNKSILNILKEEGYIKDFNFLEKKGIAFIRVLLKYDNKRNPVINKIDAISTPGRKIYSSYRNMPRIKNGYGILIISSSQGVITGKEAKDKKIGGELICSVW</sequence>
<protein>
    <recommendedName>
        <fullName evidence="1">Small ribosomal subunit protein uS8</fullName>
    </recommendedName>
    <alternativeName>
        <fullName evidence="2">30S ribosomal protein S8</fullName>
    </alternativeName>
</protein>
<dbReference type="EMBL" id="CP001205">
    <property type="protein sequence ID" value="ACK74976.1"/>
    <property type="molecule type" value="Genomic_DNA"/>
</dbReference>
<dbReference type="RefSeq" id="WP_002657008.1">
    <property type="nucleotide sequence ID" value="NC_011728.1"/>
</dbReference>
<dbReference type="SMR" id="B7J257"/>
<dbReference type="KEGG" id="bbz:BbuZS7_0503"/>
<dbReference type="HOGENOM" id="CLU_098428_0_2_12"/>
<dbReference type="Proteomes" id="UP000006901">
    <property type="component" value="Chromosome"/>
</dbReference>
<dbReference type="GO" id="GO:1990904">
    <property type="term" value="C:ribonucleoprotein complex"/>
    <property type="evidence" value="ECO:0007669"/>
    <property type="project" value="UniProtKB-KW"/>
</dbReference>
<dbReference type="GO" id="GO:0005840">
    <property type="term" value="C:ribosome"/>
    <property type="evidence" value="ECO:0007669"/>
    <property type="project" value="UniProtKB-KW"/>
</dbReference>
<dbReference type="GO" id="GO:0019843">
    <property type="term" value="F:rRNA binding"/>
    <property type="evidence" value="ECO:0007669"/>
    <property type="project" value="UniProtKB-UniRule"/>
</dbReference>
<dbReference type="GO" id="GO:0003735">
    <property type="term" value="F:structural constituent of ribosome"/>
    <property type="evidence" value="ECO:0007669"/>
    <property type="project" value="InterPro"/>
</dbReference>
<dbReference type="GO" id="GO:0006412">
    <property type="term" value="P:translation"/>
    <property type="evidence" value="ECO:0007669"/>
    <property type="project" value="UniProtKB-UniRule"/>
</dbReference>
<dbReference type="FunFam" id="3.30.1370.30:FF:000002">
    <property type="entry name" value="30S ribosomal protein S8"/>
    <property type="match status" value="1"/>
</dbReference>
<dbReference type="FunFam" id="3.30.1490.10:FF:000001">
    <property type="entry name" value="30S ribosomal protein S8"/>
    <property type="match status" value="1"/>
</dbReference>
<dbReference type="Gene3D" id="3.30.1370.30">
    <property type="match status" value="1"/>
</dbReference>
<dbReference type="Gene3D" id="3.30.1490.10">
    <property type="match status" value="1"/>
</dbReference>
<dbReference type="HAMAP" id="MF_01302_B">
    <property type="entry name" value="Ribosomal_uS8_B"/>
    <property type="match status" value="1"/>
</dbReference>
<dbReference type="InterPro" id="IPR000630">
    <property type="entry name" value="Ribosomal_uS8"/>
</dbReference>
<dbReference type="InterPro" id="IPR047863">
    <property type="entry name" value="Ribosomal_uS8_CS"/>
</dbReference>
<dbReference type="InterPro" id="IPR035987">
    <property type="entry name" value="Ribosomal_uS8_sf"/>
</dbReference>
<dbReference type="NCBIfam" id="NF001109">
    <property type="entry name" value="PRK00136.1"/>
    <property type="match status" value="1"/>
</dbReference>
<dbReference type="PANTHER" id="PTHR11758">
    <property type="entry name" value="40S RIBOSOMAL PROTEIN S15A"/>
    <property type="match status" value="1"/>
</dbReference>
<dbReference type="Pfam" id="PF00410">
    <property type="entry name" value="Ribosomal_S8"/>
    <property type="match status" value="1"/>
</dbReference>
<dbReference type="SUPFAM" id="SSF56047">
    <property type="entry name" value="Ribosomal protein S8"/>
    <property type="match status" value="1"/>
</dbReference>
<dbReference type="PROSITE" id="PS00053">
    <property type="entry name" value="RIBOSOMAL_S8"/>
    <property type="match status" value="1"/>
</dbReference>
<accession>B7J257</accession>
<comment type="function">
    <text evidence="1">One of the primary rRNA binding proteins, it binds directly to 16S rRNA central domain where it helps coordinate assembly of the platform of the 30S subunit.</text>
</comment>
<comment type="subunit">
    <text evidence="1">Part of the 30S ribosomal subunit. Contacts proteins S5 and S12.</text>
</comment>
<comment type="similarity">
    <text evidence="1">Belongs to the universal ribosomal protein uS8 family.</text>
</comment>
<reference key="1">
    <citation type="journal article" date="2011" name="J. Bacteriol.">
        <title>Whole-genome sequences of thirteen isolates of Borrelia burgdorferi.</title>
        <authorList>
            <person name="Schutzer S.E."/>
            <person name="Fraser-Liggett C.M."/>
            <person name="Casjens S.R."/>
            <person name="Qiu W.G."/>
            <person name="Dunn J.J."/>
            <person name="Mongodin E.F."/>
            <person name="Luft B.J."/>
        </authorList>
    </citation>
    <scope>NUCLEOTIDE SEQUENCE [LARGE SCALE GENOMIC DNA]</scope>
    <source>
        <strain>ZS7</strain>
    </source>
</reference>
<keyword id="KW-0687">Ribonucleoprotein</keyword>
<keyword id="KW-0689">Ribosomal protein</keyword>
<keyword id="KW-0694">RNA-binding</keyword>
<keyword id="KW-0699">rRNA-binding</keyword>
<feature type="chain" id="PRO_1000140515" description="Small ribosomal subunit protein uS8">
    <location>
        <begin position="1"/>
        <end position="132"/>
    </location>
</feature>
<evidence type="ECO:0000255" key="1">
    <source>
        <dbReference type="HAMAP-Rule" id="MF_01302"/>
    </source>
</evidence>
<evidence type="ECO:0000305" key="2"/>